<evidence type="ECO:0000255" key="1">
    <source>
        <dbReference type="HAMAP-Rule" id="MF_00402"/>
    </source>
</evidence>
<evidence type="ECO:0000305" key="2"/>
<gene>
    <name evidence="1" type="primary">rpl19</name>
    <name type="ordered locus">Grc000061</name>
</gene>
<comment type="subcellular location">
    <subcellularLocation>
        <location>Plastid</location>
        <location>Chloroplast</location>
    </subcellularLocation>
</comment>
<comment type="similarity">
    <text evidence="1">Belongs to the bacterial ribosomal protein bL19 family.</text>
</comment>
<keyword id="KW-0150">Chloroplast</keyword>
<keyword id="KW-0934">Plastid</keyword>
<keyword id="KW-0687">Ribonucleoprotein</keyword>
<keyword id="KW-0689">Ribosomal protein</keyword>
<geneLocation type="chloroplast"/>
<feature type="chain" id="PRO_0000163582" description="Large ribosomal subunit protein bL19c">
    <location>
        <begin position="1"/>
        <end position="122"/>
    </location>
</feature>
<reference key="1">
    <citation type="journal article" date="2004" name="J. Mol. Evol.">
        <title>Comparative analysis of the complete plastid genome sequence of the red alga Gracilaria tenuistipitata var. liui provides insights into the evolution of rhodoplasts and their relationship to other plastids.</title>
        <authorList>
            <person name="Hagopian J.C."/>
            <person name="Reis M."/>
            <person name="Kitajima J.P."/>
            <person name="Bhattacharya D."/>
            <person name="de Oliveira M.C."/>
        </authorList>
    </citation>
    <scope>NUCLEOTIDE SEQUENCE [LARGE SCALE GENOMIC DNA]</scope>
</reference>
<protein>
    <recommendedName>
        <fullName evidence="1">Large ribosomal subunit protein bL19c</fullName>
    </recommendedName>
    <alternativeName>
        <fullName evidence="2">50S ribosomal protein L19, chloroplastic</fullName>
    </alternativeName>
</protein>
<dbReference type="EMBL" id="AY673996">
    <property type="protein sequence ID" value="AAT79642.1"/>
    <property type="molecule type" value="Genomic_DNA"/>
</dbReference>
<dbReference type="RefSeq" id="YP_063567.1">
    <property type="nucleotide sequence ID" value="NC_006137.1"/>
</dbReference>
<dbReference type="SMR" id="Q6B8Z3"/>
<dbReference type="GeneID" id="2944100"/>
<dbReference type="GO" id="GO:0009507">
    <property type="term" value="C:chloroplast"/>
    <property type="evidence" value="ECO:0007669"/>
    <property type="project" value="UniProtKB-SubCell"/>
</dbReference>
<dbReference type="GO" id="GO:0005762">
    <property type="term" value="C:mitochondrial large ribosomal subunit"/>
    <property type="evidence" value="ECO:0007669"/>
    <property type="project" value="TreeGrafter"/>
</dbReference>
<dbReference type="GO" id="GO:0003735">
    <property type="term" value="F:structural constituent of ribosome"/>
    <property type="evidence" value="ECO:0007669"/>
    <property type="project" value="InterPro"/>
</dbReference>
<dbReference type="GO" id="GO:0006412">
    <property type="term" value="P:translation"/>
    <property type="evidence" value="ECO:0007669"/>
    <property type="project" value="UniProtKB-UniRule"/>
</dbReference>
<dbReference type="Gene3D" id="2.30.30.790">
    <property type="match status" value="1"/>
</dbReference>
<dbReference type="HAMAP" id="MF_00402">
    <property type="entry name" value="Ribosomal_bL19"/>
    <property type="match status" value="1"/>
</dbReference>
<dbReference type="InterPro" id="IPR001857">
    <property type="entry name" value="Ribosomal_bL19"/>
</dbReference>
<dbReference type="InterPro" id="IPR018257">
    <property type="entry name" value="Ribosomal_bL19_CS"/>
</dbReference>
<dbReference type="InterPro" id="IPR038657">
    <property type="entry name" value="Ribosomal_bL19_sf"/>
</dbReference>
<dbReference type="InterPro" id="IPR008991">
    <property type="entry name" value="Translation_prot_SH3-like_sf"/>
</dbReference>
<dbReference type="NCBIfam" id="TIGR01024">
    <property type="entry name" value="rplS_bact"/>
    <property type="match status" value="1"/>
</dbReference>
<dbReference type="PANTHER" id="PTHR15680:SF9">
    <property type="entry name" value="LARGE RIBOSOMAL SUBUNIT PROTEIN BL19M"/>
    <property type="match status" value="1"/>
</dbReference>
<dbReference type="PANTHER" id="PTHR15680">
    <property type="entry name" value="RIBOSOMAL PROTEIN L19"/>
    <property type="match status" value="1"/>
</dbReference>
<dbReference type="Pfam" id="PF01245">
    <property type="entry name" value="Ribosomal_L19"/>
    <property type="match status" value="1"/>
</dbReference>
<dbReference type="PIRSF" id="PIRSF002191">
    <property type="entry name" value="Ribosomal_L19"/>
    <property type="match status" value="1"/>
</dbReference>
<dbReference type="PRINTS" id="PR00061">
    <property type="entry name" value="RIBOSOMALL19"/>
</dbReference>
<dbReference type="SUPFAM" id="SSF50104">
    <property type="entry name" value="Translation proteins SH3-like domain"/>
    <property type="match status" value="1"/>
</dbReference>
<dbReference type="PROSITE" id="PS01015">
    <property type="entry name" value="RIBOSOMAL_L19"/>
    <property type="match status" value="1"/>
</dbReference>
<name>RK19_GRATL</name>
<organism>
    <name type="scientific">Gracilaria tenuistipitata var. liui</name>
    <name type="common">Red alga</name>
    <dbReference type="NCBI Taxonomy" id="285951"/>
    <lineage>
        <taxon>Eukaryota</taxon>
        <taxon>Rhodophyta</taxon>
        <taxon>Florideophyceae</taxon>
        <taxon>Rhodymeniophycidae</taxon>
        <taxon>Gracilariales</taxon>
        <taxon>Gracilariaceae</taxon>
        <taxon>Gracilaria</taxon>
        <taxon>Gracilaria tenuistipitata</taxon>
    </lineage>
</organism>
<sequence length="122" mass="14331">MYLKKHYKNLITHEIEEEFKKNDIPILDIGDSIKMSILIHEGNKQRIQNVEGVIIAKHKSQLSTTITVRKIVQNIGVERIYLIHSPLIKNIKIVRKAKVRRAKLYYLRLRSGKATRLKTKFN</sequence>
<accession>Q6B8Z3</accession>
<proteinExistence type="inferred from homology"/>